<gene>
    <name evidence="6" type="primary">mftD</name>
    <name evidence="9" type="ordered locus">MSMEG_1424</name>
</gene>
<feature type="chain" id="PRO_0000452053" description="Pre-mycofactocin synthase">
    <location>
        <begin position="1"/>
        <end position="399"/>
    </location>
</feature>
<feature type="domain" description="FMN hydroxy acid dehydrogenase" evidence="2">
    <location>
        <begin position="4"/>
        <end position="386"/>
    </location>
</feature>
<feature type="active site" description="Proton acceptor" evidence="2">
    <location>
        <position position="281"/>
    </location>
</feature>
<feature type="binding site" evidence="2">
    <location>
        <position position="111"/>
    </location>
    <ligand>
        <name>FMN</name>
        <dbReference type="ChEBI" id="CHEBI:58210"/>
    </ligand>
</feature>
<feature type="binding site" evidence="2">
    <location>
        <position position="131"/>
    </location>
    <ligand>
        <name>FMN</name>
        <dbReference type="ChEBI" id="CHEBI:58210"/>
    </ligand>
</feature>
<feature type="binding site" evidence="2">
    <location>
        <position position="133"/>
    </location>
    <ligand>
        <name>a 2-oxocarboxylate</name>
        <dbReference type="ChEBI" id="CHEBI:35179"/>
    </ligand>
</feature>
<feature type="binding site" evidence="2">
    <location>
        <position position="159"/>
    </location>
    <ligand>
        <name>FMN</name>
        <dbReference type="ChEBI" id="CHEBI:58210"/>
    </ligand>
</feature>
<feature type="binding site" evidence="2">
    <location>
        <position position="168"/>
    </location>
    <ligand>
        <name>a 2-oxocarboxylate</name>
        <dbReference type="ChEBI" id="CHEBI:35179"/>
    </ligand>
</feature>
<feature type="binding site" evidence="2">
    <location>
        <position position="257"/>
    </location>
    <ligand>
        <name>FMN</name>
        <dbReference type="ChEBI" id="CHEBI:58210"/>
    </ligand>
</feature>
<feature type="binding site" evidence="2">
    <location>
        <begin position="312"/>
        <end position="316"/>
    </location>
    <ligand>
        <name>FMN</name>
        <dbReference type="ChEBI" id="CHEBI:58210"/>
    </ligand>
</feature>
<feature type="binding site" evidence="2">
    <location>
        <begin position="335"/>
        <end position="336"/>
    </location>
    <ligand>
        <name>FMN</name>
        <dbReference type="ChEBI" id="CHEBI:58210"/>
    </ligand>
</feature>
<sequence length="399" mass="42774">MNMARDIWFETVAIAQQRARKRLPKSVYSSLISASEKGVTVTDNVESFAELGFAPHVVGAPEKRDMATTVMGQQISLPVIISPTGVQAVHPDGEVAVARAAAARGTAMGLSSFASKPIEEVVAVNDKIFFQIYWLGDRDAILARAERAKAAGAVGLIVTTDWSFSHGRDWGSPKIPEKMDLKTMVTMMPEALTKPRWLWQWGKTMRPPNLRVPNQGARGEDGPPFFQAYGEWMGTPPPTWEDIAWLREQWDGPFMLKGVIRVDDAKRAVDAGVSAISVSNHGGNNLDGTPAAIRALPVIAEAVGDQVEVLLDGGIRRGSDVVKAVALGARAVMIGRAYLWGLAAEGQVGVENVLDILRGGIDSALMGLGRSSIHDLVPEDILVPEGFTRALGVPPASGS</sequence>
<protein>
    <recommendedName>
        <fullName evidence="8">Pre-mycofactocin synthase</fullName>
        <shortName evidence="8">PMFT synthase</shortName>
        <ecNumber evidence="4">1.4.3.26</ecNumber>
    </recommendedName>
</protein>
<dbReference type="EC" id="1.4.3.26" evidence="4"/>
<dbReference type="EMBL" id="CP000480">
    <property type="protein sequence ID" value="ABK72067.1"/>
    <property type="molecule type" value="Genomic_DNA"/>
</dbReference>
<dbReference type="RefSeq" id="YP_885807.1">
    <property type="nucleotide sequence ID" value="NC_008596.1"/>
</dbReference>
<dbReference type="SMR" id="A0QSB9"/>
<dbReference type="STRING" id="246196.MSMEG_1424"/>
<dbReference type="PaxDb" id="246196-MSMEI_1389"/>
<dbReference type="KEGG" id="msm:MSMEG_1424"/>
<dbReference type="PATRIC" id="fig|246196.19.peg.1411"/>
<dbReference type="eggNOG" id="COG1304">
    <property type="taxonomic scope" value="Bacteria"/>
</dbReference>
<dbReference type="OrthoDB" id="9770452at2"/>
<dbReference type="BRENDA" id="1.4.3.26">
    <property type="organism ID" value="3512"/>
</dbReference>
<dbReference type="Proteomes" id="UP000000757">
    <property type="component" value="Chromosome"/>
</dbReference>
<dbReference type="GO" id="GO:0010181">
    <property type="term" value="F:FMN binding"/>
    <property type="evidence" value="ECO:0007669"/>
    <property type="project" value="InterPro"/>
</dbReference>
<dbReference type="GO" id="GO:0016491">
    <property type="term" value="F:oxidoreductase activity"/>
    <property type="evidence" value="ECO:0007669"/>
    <property type="project" value="UniProtKB-KW"/>
</dbReference>
<dbReference type="GO" id="GO:0140604">
    <property type="term" value="P:mycofactocin biosynthetic process"/>
    <property type="evidence" value="ECO:0000250"/>
    <property type="project" value="UniProtKB"/>
</dbReference>
<dbReference type="CDD" id="cd02809">
    <property type="entry name" value="alpha_hydroxyacid_oxid_FMN"/>
    <property type="match status" value="1"/>
</dbReference>
<dbReference type="Gene3D" id="3.20.20.70">
    <property type="entry name" value="Aldolase class I"/>
    <property type="match status" value="1"/>
</dbReference>
<dbReference type="InterPro" id="IPR013785">
    <property type="entry name" value="Aldolase_TIM"/>
</dbReference>
<dbReference type="InterPro" id="IPR012133">
    <property type="entry name" value="Alpha-hydoxy_acid_DH_FMN"/>
</dbReference>
<dbReference type="InterPro" id="IPR000262">
    <property type="entry name" value="FMN-dep_DH"/>
</dbReference>
<dbReference type="InterPro" id="IPR037396">
    <property type="entry name" value="FMN_HAD"/>
</dbReference>
<dbReference type="InterPro" id="IPR023989">
    <property type="entry name" value="MftD"/>
</dbReference>
<dbReference type="NCBIfam" id="TIGR03966">
    <property type="entry name" value="actino_HemFlav"/>
    <property type="match status" value="1"/>
</dbReference>
<dbReference type="PANTHER" id="PTHR10578:SF107">
    <property type="entry name" value="2-HYDROXYACID OXIDASE 1"/>
    <property type="match status" value="1"/>
</dbReference>
<dbReference type="PANTHER" id="PTHR10578">
    <property type="entry name" value="S -2-HYDROXY-ACID OXIDASE-RELATED"/>
    <property type="match status" value="1"/>
</dbReference>
<dbReference type="Pfam" id="PF01070">
    <property type="entry name" value="FMN_dh"/>
    <property type="match status" value="1"/>
</dbReference>
<dbReference type="PIRSF" id="PIRSF000138">
    <property type="entry name" value="Al-hdrx_acd_dh"/>
    <property type="match status" value="1"/>
</dbReference>
<dbReference type="SUPFAM" id="SSF51395">
    <property type="entry name" value="FMN-linked oxidoreductases"/>
    <property type="match status" value="1"/>
</dbReference>
<dbReference type="PROSITE" id="PS51349">
    <property type="entry name" value="FMN_HYDROXY_ACID_DH_2"/>
    <property type="match status" value="1"/>
</dbReference>
<reference key="1">
    <citation type="submission" date="2006-10" db="EMBL/GenBank/DDBJ databases">
        <authorList>
            <person name="Fleischmann R.D."/>
            <person name="Dodson R.J."/>
            <person name="Haft D.H."/>
            <person name="Merkel J.S."/>
            <person name="Nelson W.C."/>
            <person name="Fraser C.M."/>
        </authorList>
    </citation>
    <scope>NUCLEOTIDE SEQUENCE [LARGE SCALE GENOMIC DNA]</scope>
    <source>
        <strain>ATCC 700084 / mc(2)155</strain>
    </source>
</reference>
<reference key="2">
    <citation type="journal article" date="2019" name="J. Am. Chem. Soc.">
        <title>MftD Catalyzes the Formation of a Biologically Active Redox Center in the Biosynthesis of the Ribosomally Synthesized and Post-translationally Modified Redox Cofactor Mycofactocin.</title>
        <authorList>
            <person name="Ayikpoe R.S."/>
            <person name="Latham J.A."/>
        </authorList>
    </citation>
    <scope>FUNCTION</scope>
    <scope>CATALYTIC ACTIVITY</scope>
    <source>
        <strain>ATCC 700084 / mc(2)155</strain>
    </source>
</reference>
<reference key="3">
    <citation type="journal article" date="2019" name="MBio">
        <title>Mycofactocin Is Associated with Ethanol Metabolism in Mycobacteria.</title>
        <authorList>
            <person name="Krishnamoorthy G."/>
            <person name="Kaiser P."/>
            <person name="Lozza L."/>
            <person name="Hahnke K."/>
            <person name="Mollenkopf H.J."/>
            <person name="Kaufmann S.H.E."/>
        </authorList>
    </citation>
    <scope>FUNCTION</scope>
    <scope>DISRUPTION PHENOTYPE</scope>
    <source>
        <strain>ATCC 700084 / mc(2)155</strain>
    </source>
</reference>
<reference key="4">
    <citation type="journal article" date="2020" name="Chem. Sci.">
        <title>Structure elucidation of the redox cofactor mycofactocin reveals oligo-glycosylation by MftF.</title>
        <authorList>
            <person name="Pena-Ortiz L."/>
            <person name="Graca A.P."/>
            <person name="Guo H."/>
            <person name="Braga D."/>
            <person name="Koellner T.G."/>
            <person name="Regestein L."/>
            <person name="Beemelmanns C."/>
            <person name="Lackner G."/>
        </authorList>
    </citation>
    <scope>FUNCTION</scope>
    <scope>DISRUPTION PHENOTYPE</scope>
    <source>
        <strain>ATCC 700084 / mc(2)155</strain>
    </source>
</reference>
<keyword id="KW-0285">Flavoprotein</keyword>
<keyword id="KW-0288">FMN</keyword>
<keyword id="KW-0560">Oxidoreductase</keyword>
<keyword id="KW-1185">Reference proteome</keyword>
<name>MFTD_MYCS2</name>
<proteinExistence type="evidence at protein level"/>
<evidence type="ECO:0000250" key="1">
    <source>
        <dbReference type="UniProtKB" id="A0PM50"/>
    </source>
</evidence>
<evidence type="ECO:0000255" key="2">
    <source>
        <dbReference type="PROSITE-ProRule" id="PRU00683"/>
    </source>
</evidence>
<evidence type="ECO:0000269" key="3">
    <source>
    </source>
</evidence>
<evidence type="ECO:0000269" key="4">
    <source>
    </source>
</evidence>
<evidence type="ECO:0000269" key="5">
    <source>
    </source>
</evidence>
<evidence type="ECO:0000303" key="6">
    <source>
    </source>
</evidence>
<evidence type="ECO:0000305" key="7"/>
<evidence type="ECO:0000305" key="8">
    <source>
    </source>
</evidence>
<evidence type="ECO:0000312" key="9">
    <source>
        <dbReference type="EMBL" id="ABK72067.1"/>
    </source>
</evidence>
<organism>
    <name type="scientific">Mycolicibacterium smegmatis (strain ATCC 700084 / mc(2)155)</name>
    <name type="common">Mycobacterium smegmatis</name>
    <dbReference type="NCBI Taxonomy" id="246196"/>
    <lineage>
        <taxon>Bacteria</taxon>
        <taxon>Bacillati</taxon>
        <taxon>Actinomycetota</taxon>
        <taxon>Actinomycetes</taxon>
        <taxon>Mycobacteriales</taxon>
        <taxon>Mycobacteriaceae</taxon>
        <taxon>Mycolicibacterium</taxon>
    </lineage>
</organism>
<accession>A0QSB9</accession>
<comment type="function">
    <text evidence="3 4 5">Involved in the biosynthesis of the enzyme cofactor mycofactocin (MFT) (PubMed:33014324). Catalyzes the oxidative deamination of AHDP (3-amino-5-[(4-hydroxyphenyl)methyl]-4,4-dimethyl-2-pyrrolidin-2-one), forming an alpha-keto amide moiety on the resulting molecule, which is called pre-mycofactocin (PMFT). This reaction occurs via a 5-[(4-hydroxyphenyl)methyl]-3-imino-4,4-dimethylpyrrolidin-2-one intermediate, which converts to PMFT. The alpha-keto amide moiety is the redox-active center for the redox activity of mycofactocin (PubMed:31381312). Is required for the in vivo ethanol assimilation in M.smegmatis (PubMed:31113891).</text>
</comment>
<comment type="catalytic activity">
    <reaction evidence="4">
        <text>3-amino-5-[(4-hydroxyphenyl)methyl]-4,4-dimethyl-2-pyrrolidin-2-one + O2 + H2O = pre-mycofactocin + H2O2 + NH4(+)</text>
        <dbReference type="Rhea" id="RHEA:65508"/>
        <dbReference type="ChEBI" id="CHEBI:15377"/>
        <dbReference type="ChEBI" id="CHEBI:15379"/>
        <dbReference type="ChEBI" id="CHEBI:16240"/>
        <dbReference type="ChEBI" id="CHEBI:28938"/>
        <dbReference type="ChEBI" id="CHEBI:150862"/>
        <dbReference type="ChEBI" id="CHEBI:150863"/>
        <dbReference type="EC" id="1.4.3.26"/>
    </reaction>
</comment>
<comment type="cofactor">
    <cofactor evidence="1">
        <name>FMN</name>
        <dbReference type="ChEBI" id="CHEBI:58210"/>
    </cofactor>
</comment>
<comment type="disruption phenotype">
    <text evidence="3 5">Cells lacking this gene lose the ability to utilize ethanol as the sole growth substrate (PubMed:31113891). They are unable to produce PMFT(H2) and glycosylated (methyl)MFT(H2), and accumulate AHDP and glycosylated AHDP (PubMed:33014324).</text>
</comment>
<comment type="similarity">
    <text evidence="7">Belongs to the FMN-dependent alpha-hydroxy acid dehydrogenase family.</text>
</comment>